<reference key="1">
    <citation type="journal article" date="1998" name="Science">
        <title>Genome sequence of the nematode C. elegans: a platform for investigating biology.</title>
        <authorList>
            <consortium name="The C. elegans sequencing consortium"/>
        </authorList>
    </citation>
    <scope>NUCLEOTIDE SEQUENCE [LARGE SCALE GENOMIC DNA]</scope>
    <source>
        <strain>Bristol N2</strain>
    </source>
</reference>
<reference key="2">
    <citation type="submission" date="2000-08" db="EMBL/GenBank/DDBJ databases">
        <title>The Caenorhabditis elegans transcriptome project, a complementary view of the genome.</title>
        <authorList>
            <person name="Kohara Y."/>
            <person name="Shin-i T."/>
            <person name="Suzuki Y."/>
            <person name="Sugano S."/>
            <person name="Potdevin M."/>
            <person name="Thierry-Mieg Y."/>
            <person name="Thierry-Mieg D."/>
            <person name="Thierry-Mieg J."/>
        </authorList>
    </citation>
    <scope>NUCLEOTIDE SEQUENCE [LARGE SCALE MRNA]</scope>
    <source>
        <strain>Bristol N2</strain>
    </source>
</reference>
<protein>
    <recommendedName>
        <fullName>Uncharacterized protein C26F1.3</fullName>
    </recommendedName>
</protein>
<dbReference type="EMBL" id="FO080683">
    <property type="protein sequence ID" value="CCD65768.1"/>
    <property type="molecule type" value="Genomic_DNA"/>
</dbReference>
<dbReference type="EMBL" id="AF303248">
    <property type="protein sequence ID" value="AAG50206.1"/>
    <property type="molecule type" value="mRNA"/>
</dbReference>
<dbReference type="PIR" id="T15643">
    <property type="entry name" value="T15643"/>
</dbReference>
<dbReference type="RefSeq" id="NP_505008.1">
    <property type="nucleotide sequence ID" value="NM_072607.9"/>
</dbReference>
<dbReference type="SMR" id="Q18232"/>
<dbReference type="BioGRID" id="44198">
    <property type="interactions" value="2"/>
</dbReference>
<dbReference type="FunCoup" id="Q18232">
    <property type="interactions" value="202"/>
</dbReference>
<dbReference type="IntAct" id="Q18232">
    <property type="interactions" value="1"/>
</dbReference>
<dbReference type="STRING" id="6239.C26F1.3.1"/>
<dbReference type="PaxDb" id="6239-C26F1.3.1"/>
<dbReference type="PeptideAtlas" id="Q18232"/>
<dbReference type="EnsemblMetazoa" id="C26F1.3.1">
    <property type="protein sequence ID" value="C26F1.3.1"/>
    <property type="gene ID" value="WBGene00016148"/>
</dbReference>
<dbReference type="GeneID" id="179155"/>
<dbReference type="KEGG" id="cel:CELE_C26F1.3"/>
<dbReference type="UCSC" id="C26F1.3.1">
    <property type="organism name" value="c. elegans"/>
</dbReference>
<dbReference type="AGR" id="WB:WBGene00016148"/>
<dbReference type="CTD" id="179155"/>
<dbReference type="WormBase" id="C26F1.3">
    <property type="protein sequence ID" value="CE06877"/>
    <property type="gene ID" value="WBGene00016148"/>
</dbReference>
<dbReference type="eggNOG" id="ENOG502TG7S">
    <property type="taxonomic scope" value="Eukaryota"/>
</dbReference>
<dbReference type="HOGENOM" id="CLU_1455657_0_0_1"/>
<dbReference type="InParanoid" id="Q18232"/>
<dbReference type="OMA" id="YMVYETN"/>
<dbReference type="OrthoDB" id="5842693at2759"/>
<dbReference type="PRO" id="PR:Q18232"/>
<dbReference type="Proteomes" id="UP000001940">
    <property type="component" value="Chromosome V"/>
</dbReference>
<dbReference type="Bgee" id="WBGene00016148">
    <property type="expression patterns" value="Expressed in germ line (C elegans) and 4 other cell types or tissues"/>
</dbReference>
<feature type="chain" id="PRO_0000065190" description="Uncharacterized protein C26F1.3">
    <location>
        <begin position="1"/>
        <end position="186"/>
    </location>
</feature>
<proteinExistence type="evidence at transcript level"/>
<organism>
    <name type="scientific">Caenorhabditis elegans</name>
    <dbReference type="NCBI Taxonomy" id="6239"/>
    <lineage>
        <taxon>Eukaryota</taxon>
        <taxon>Metazoa</taxon>
        <taxon>Ecdysozoa</taxon>
        <taxon>Nematoda</taxon>
        <taxon>Chromadorea</taxon>
        <taxon>Rhabditida</taxon>
        <taxon>Rhabditina</taxon>
        <taxon>Rhabditomorpha</taxon>
        <taxon>Rhabditoidea</taxon>
        <taxon>Rhabditidae</taxon>
        <taxon>Peloderinae</taxon>
        <taxon>Caenorhabditis</taxon>
    </lineage>
</organism>
<name>YBRI_CAEEL</name>
<gene>
    <name type="ORF">C26F1.3</name>
</gene>
<keyword id="KW-1185">Reference proteome</keyword>
<sequence>MSEELLQKFLTSIEQEDGIAEIGKKKKNKSAARRDNVKTILHAASKGQVQLSAEESYIVQKPSTSKGSDYIDDRLASQGFSLIDQARSFKPKDLKKRNLKYMKFQEGRRIDKKKGRILVQAHMQTKQDLKSLRKEKKAIIGVKEPRRLLPGQKKKQKDKSVFSDADFAQVAHVAKRINSMADHSFL</sequence>
<accession>Q18232</accession>